<sequence>MASYFALVLNGISMVFSQGLFPLYTIPDHLGPWTPIDLSHLHCPNNLYTDASYCTTEQSITYTELKVGSSVSQKIPGFTCTGVRTESVTYTNFVGYVTTTFKKKHFPPKSRDCREAYERKKAGDPRYEESLAHPYPDNSWLRTVTTTKDSWVIIEPSVVELDIYTSALYSPLFKDGTCSKSRTYSPYCPTNHDFTIWMPESENIRSACNLFSTSRGKLVRNRTSTCGIIDERGLFRSVKGACKISICGRQGIRLVDGTWMSFRYSEYLPVCSPSQLINTHDIKVDELENAIVLDLIRRREECLDTLETILMSGSVSHRRLSHFRKLVPGSGKAYSYINGTLMESDAHYIKVENWSEVIPHKGCLMVGGKCYEPVNDVYFNGIIRDSNNQILIPEMQSSLLREHVDLLKANIVPFRHPMLLRSFTSDTEEDIVEFVNPHLQDTQKLVSDMDLGLSDWKRYLLIGSLAVGGVVAILFIGTCCLRCRAGRNRRTIRSNHRSLSHDVVFHKDKDKVITSWESYKGQTAQ</sequence>
<feature type="signal peptide" evidence="2">
    <location>
        <begin position="1"/>
        <end position="17"/>
    </location>
</feature>
<feature type="chain" id="PRO_0000295804" description="Glycoprotein">
    <location>
        <begin position="18"/>
        <end position="525"/>
    </location>
</feature>
<feature type="topological domain" description="Virion surface" evidence="2">
    <location>
        <begin position="18"/>
        <end position="459"/>
    </location>
</feature>
<feature type="transmembrane region" description="Helical" evidence="2">
    <location>
        <begin position="460"/>
        <end position="480"/>
    </location>
</feature>
<feature type="topological domain" description="Intravirion" evidence="2">
    <location>
        <begin position="481"/>
        <end position="525"/>
    </location>
</feature>
<feature type="lipid moiety-binding region" description="S-palmitoyl cysteine; by host" evidence="1">
    <location>
        <position position="480"/>
    </location>
</feature>
<feature type="glycosylation site" description="N-linked (GlcNAc...) asparagine; by host" evidence="2">
    <location>
        <position position="221"/>
    </location>
</feature>
<feature type="glycosylation site" description="N-linked (GlcNAc...) asparagine; by host" evidence="1">
    <location>
        <position position="338"/>
    </location>
</feature>
<keyword id="KW-0325">Glycoprotein</keyword>
<keyword id="KW-0449">Lipoprotein</keyword>
<keyword id="KW-0472">Membrane</keyword>
<keyword id="KW-0564">Palmitate</keyword>
<keyword id="KW-1185">Reference proteome</keyword>
<keyword id="KW-0732">Signal</keyword>
<keyword id="KW-0812">Transmembrane</keyword>
<keyword id="KW-1133">Transmembrane helix</keyword>
<keyword id="KW-0261">Viral envelope protein</keyword>
<keyword id="KW-0946">Virion</keyword>
<comment type="function">
    <text evidence="1">Attaches the virus to host cellular receptor, inducing endocytosis of the virion. In the endosome, the acidic pH induces conformational changes in the glycoprotein trimer, which trigger fusion between virus and cell membrane. There is convincing in vitro evidence that the muscular form of the nicotinic acetylcholine receptor (nAChR), the neuronal cell adhesion molecule (NCAM), and the p75 neurotrophin receptor (p75NTR) bind glycoprotein and thereby facilitate rabies virus entry into cells (By similarity).</text>
</comment>
<comment type="subunit">
    <text evidence="1">Homotrimer. Interacts with matrix protein (By similarity).</text>
</comment>
<comment type="subcellular location">
    <subcellularLocation>
        <location evidence="3">Virion membrane</location>
        <topology evidence="3">Single-pass type I membrane protein</topology>
    </subcellularLocation>
</comment>
<comment type="PTM">
    <text evidence="1">Glycosylated and palmitoylated by host. Glycosylation is crucial for glycoprotein export at the cell surface (By similarity).</text>
</comment>
<comment type="biotechnology">
    <text>Primary surface antigen capable of inducing and reacting with virus-neutralizing antibodies. Almost all human and veterinary vaccines are based on the functional aspects of the G protein.</text>
</comment>
<comment type="miscellaneous">
    <text evidence="1">Arg-352 is highly involved in rabies virus pathogenicity. Its mutation dramatically attenuates the virus (By similarity).</text>
</comment>
<comment type="similarity">
    <text evidence="3">Belongs to the lyssavirus glycoprotein family.</text>
</comment>
<organismHost>
    <name type="scientific">Miniopterus schreibersii</name>
    <name type="common">Schreibers's long-fingered bat</name>
    <name type="synonym">Vespertilio schreibersii</name>
    <dbReference type="NCBI Taxonomy" id="9433"/>
</organismHost>
<name>GLYCO_WCBV</name>
<reference key="1">
    <citation type="journal article" date="2005" name="Virus Res.">
        <title>Phylogenetic relationships of Irkut and West Caucasian bat viruses within the Lyssavirus genus and suggested quantitative criteria based on the N gene sequence for lyssavirus genotype definition.</title>
        <authorList>
            <person name="Kuzmin I.V."/>
            <person name="Hughes G.J."/>
            <person name="Botvinkin A.D."/>
            <person name="Orciari L.A."/>
            <person name="Rupprecht C.E."/>
        </authorList>
    </citation>
    <scope>NUCLEOTIDE SEQUENCE [MRNA]</scope>
</reference>
<reference key="2">
    <citation type="journal article" date="2008" name="Virus Res.">
        <title>Complete genomes of Aravan, Khujand, Irkut and West Caucasian bat viruses, with special attention to the polymerase gene and non-coding regions.</title>
        <authorList>
            <person name="Kuzmin I.V."/>
            <person name="Wu X."/>
            <person name="Tordo N."/>
            <person name="Rupprecht C.E."/>
        </authorList>
    </citation>
    <scope>NUCLEOTIDE SEQUENCE [GENOMIC RNA]</scope>
</reference>
<protein>
    <recommendedName>
        <fullName>Glycoprotein</fullName>
    </recommendedName>
</protein>
<dbReference type="EMBL" id="EF614258">
    <property type="protein sequence ID" value="AAR03484.1"/>
    <property type="molecule type" value="mRNA"/>
</dbReference>
<dbReference type="RefSeq" id="YP_009094271.1">
    <property type="nucleotide sequence ID" value="NC_025377.1"/>
</dbReference>
<dbReference type="SMR" id="Q5VKN9"/>
<dbReference type="GlyCosmos" id="Q5VKN9">
    <property type="glycosylation" value="2 sites, No reported glycans"/>
</dbReference>
<dbReference type="GeneID" id="20964561"/>
<dbReference type="KEGG" id="vg:20964561"/>
<dbReference type="OrthoDB" id="21147at10239"/>
<dbReference type="Proteomes" id="UP000095862">
    <property type="component" value="Genome"/>
</dbReference>
<dbReference type="GO" id="GO:0016020">
    <property type="term" value="C:membrane"/>
    <property type="evidence" value="ECO:0007669"/>
    <property type="project" value="UniProtKB-KW"/>
</dbReference>
<dbReference type="GO" id="GO:0019031">
    <property type="term" value="C:viral envelope"/>
    <property type="evidence" value="ECO:0007669"/>
    <property type="project" value="UniProtKB-KW"/>
</dbReference>
<dbReference type="GO" id="GO:0055036">
    <property type="term" value="C:virion membrane"/>
    <property type="evidence" value="ECO:0007669"/>
    <property type="project" value="UniProtKB-SubCell"/>
</dbReference>
<dbReference type="Gene3D" id="2.30.29.130">
    <property type="match status" value="1"/>
</dbReference>
<dbReference type="InterPro" id="IPR055448">
    <property type="entry name" value="PH_Rhabdo_glycop"/>
</dbReference>
<dbReference type="InterPro" id="IPR055447">
    <property type="entry name" value="Rhabdo_glycop_CD"/>
</dbReference>
<dbReference type="InterPro" id="IPR001903">
    <property type="entry name" value="Rhabdo_glycop_FD"/>
</dbReference>
<dbReference type="Pfam" id="PF24834">
    <property type="entry name" value="PH_Rhabdo_glycop"/>
    <property type="match status" value="1"/>
</dbReference>
<dbReference type="Pfam" id="PF24833">
    <property type="entry name" value="Rhabdo_glycop_CD"/>
    <property type="match status" value="1"/>
</dbReference>
<dbReference type="Pfam" id="PF00974">
    <property type="entry name" value="Rhabdo_glycop_FD"/>
    <property type="match status" value="1"/>
</dbReference>
<dbReference type="SUPFAM" id="SSF161008">
    <property type="entry name" value="Viral glycoprotein ectodomain-like"/>
    <property type="match status" value="1"/>
</dbReference>
<proteinExistence type="evidence at protein level"/>
<organism>
    <name type="scientific">West Caucasian bat virus</name>
    <name type="common">WCBV</name>
    <dbReference type="NCBI Taxonomy" id="249584"/>
    <lineage>
        <taxon>Viruses</taxon>
        <taxon>Riboviria</taxon>
        <taxon>Orthornavirae</taxon>
        <taxon>Negarnaviricota</taxon>
        <taxon>Haploviricotina</taxon>
        <taxon>Monjiviricetes</taxon>
        <taxon>Mononegavirales</taxon>
        <taxon>Rhabdoviridae</taxon>
        <taxon>Alpharhabdovirinae</taxon>
        <taxon>Lyssavirus</taxon>
    </lineage>
</organism>
<accession>Q5VKN9</accession>
<gene>
    <name type="primary">G</name>
</gene>
<evidence type="ECO:0000250" key="1"/>
<evidence type="ECO:0000255" key="2"/>
<evidence type="ECO:0000305" key="3"/>